<feature type="initiator methionine" description="Removed" evidence="16">
    <location>
        <position position="1"/>
    </location>
</feature>
<feature type="chain" id="PRO_0000170308" description="2-iminobutanoate/2-iminopropanoate deaminase">
    <location>
        <begin position="2"/>
        <end position="137"/>
    </location>
</feature>
<feature type="modified residue" description="N-acetylserine" evidence="16">
    <location>
        <position position="2"/>
    </location>
</feature>
<feature type="modified residue" description="N6-succinyllysine" evidence="2">
    <location>
        <position position="13"/>
    </location>
</feature>
<feature type="modified residue" description="N6-succinyllysine" evidence="2">
    <location>
        <position position="60"/>
    </location>
</feature>
<feature type="modified residue" description="N6-succinyllysine" evidence="2">
    <location>
        <position position="67"/>
    </location>
</feature>
<feature type="modified residue" description="Phosphothreonine" evidence="15">
    <location>
        <position position="74"/>
    </location>
</feature>
<feature type="modified residue" description="Phosphoserine" evidence="15">
    <location>
        <position position="136"/>
    </location>
</feature>
<feature type="sequence conflict" description="In Ref. 3; CAG46453." evidence="11" ref="3">
    <original>A</original>
    <variation>V</variation>
    <location>
        <position position="84"/>
    </location>
</feature>
<feature type="strand" evidence="17">
    <location>
        <begin position="4"/>
        <end position="9"/>
    </location>
</feature>
<feature type="strand" evidence="17">
    <location>
        <begin position="22"/>
        <end position="27"/>
    </location>
</feature>
<feature type="strand" evidence="17">
    <location>
        <begin position="30"/>
        <end position="36"/>
    </location>
</feature>
<feature type="turn" evidence="17">
    <location>
        <begin position="41"/>
        <end position="43"/>
    </location>
</feature>
<feature type="strand" evidence="17">
    <location>
        <begin position="48"/>
        <end position="50"/>
    </location>
</feature>
<feature type="helix" evidence="17">
    <location>
        <begin position="51"/>
        <end position="68"/>
    </location>
</feature>
<feature type="helix" evidence="17">
    <location>
        <begin position="73"/>
        <end position="75"/>
    </location>
</feature>
<feature type="strand" evidence="17">
    <location>
        <begin position="76"/>
        <end position="84"/>
    </location>
</feature>
<feature type="helix" evidence="17">
    <location>
        <begin position="86"/>
        <end position="88"/>
    </location>
</feature>
<feature type="helix" evidence="17">
    <location>
        <begin position="89"/>
        <end position="99"/>
    </location>
</feature>
<feature type="strand" evidence="17">
    <location>
        <begin position="106"/>
        <end position="111"/>
    </location>
</feature>
<feature type="helix" evidence="17">
    <location>
        <begin position="116"/>
        <end position="118"/>
    </location>
</feature>
<feature type="strand" evidence="17">
    <location>
        <begin position="120"/>
        <end position="128"/>
    </location>
</feature>
<feature type="strand" evidence="17">
    <location>
        <begin position="132"/>
        <end position="135"/>
    </location>
</feature>
<keyword id="KW-0002">3D-structure</keyword>
<keyword id="KW-0007">Acetylation</keyword>
<keyword id="KW-0963">Cytoplasm</keyword>
<keyword id="KW-0903">Direct protein sequencing</keyword>
<keyword id="KW-0378">Hydrolase</keyword>
<keyword id="KW-0443">Lipid metabolism</keyword>
<keyword id="KW-0496">Mitochondrion</keyword>
<keyword id="KW-0539">Nucleus</keyword>
<keyword id="KW-0576">Peroxisome</keyword>
<keyword id="KW-0597">Phosphoprotein</keyword>
<keyword id="KW-1267">Proteomics identification</keyword>
<keyword id="KW-1185">Reference proteome</keyword>
<keyword id="KW-0694">RNA-binding</keyword>
<proteinExistence type="evidence at protein level"/>
<evidence type="ECO:0000250" key="1">
    <source>
        <dbReference type="UniProtKB" id="P52759"/>
    </source>
</evidence>
<evidence type="ECO:0000250" key="2">
    <source>
        <dbReference type="UniProtKB" id="P52760"/>
    </source>
</evidence>
<evidence type="ECO:0000269" key="3">
    <source>
    </source>
</evidence>
<evidence type="ECO:0000269" key="4">
    <source>
    </source>
</evidence>
<evidence type="ECO:0000269" key="5">
    <source>
    </source>
</evidence>
<evidence type="ECO:0000269" key="6">
    <source>
    </source>
</evidence>
<evidence type="ECO:0000269" key="7">
    <source>
    </source>
</evidence>
<evidence type="ECO:0000269" key="8">
    <source>
    </source>
</evidence>
<evidence type="ECO:0000303" key="9">
    <source>
    </source>
</evidence>
<evidence type="ECO:0000303" key="10">
    <source>
    </source>
</evidence>
<evidence type="ECO:0000305" key="11"/>
<evidence type="ECO:0000305" key="12">
    <source>
    </source>
</evidence>
<evidence type="ECO:0000305" key="13">
    <source>
    </source>
</evidence>
<evidence type="ECO:0000312" key="14">
    <source>
        <dbReference type="HGNC" id="HGNC:16897"/>
    </source>
</evidence>
<evidence type="ECO:0007744" key="15">
    <source>
    </source>
</evidence>
<evidence type="ECO:0007744" key="16">
    <source>
    </source>
</evidence>
<evidence type="ECO:0007829" key="17">
    <source>
        <dbReference type="PDB" id="1ONI"/>
    </source>
</evidence>
<accession>P52758</accession>
<accession>Q6FHU9</accession>
<accession>Q6IBG0</accession>
<dbReference type="EC" id="3.5.99.10" evidence="5"/>
<dbReference type="EMBL" id="X95384">
    <property type="protein sequence ID" value="CAA64670.1"/>
    <property type="molecule type" value="mRNA"/>
</dbReference>
<dbReference type="EMBL" id="AY026764">
    <property type="protein sequence ID" value="AAK01939.1"/>
    <property type="molecule type" value="Genomic_DNA"/>
</dbReference>
<dbReference type="EMBL" id="CR456844">
    <property type="protein sequence ID" value="CAG33125.1"/>
    <property type="molecule type" value="mRNA"/>
</dbReference>
<dbReference type="EMBL" id="CR541652">
    <property type="protein sequence ID" value="CAG46453.1"/>
    <property type="molecule type" value="mRNA"/>
</dbReference>
<dbReference type="EMBL" id="CH471060">
    <property type="protein sequence ID" value="EAW91774.1"/>
    <property type="molecule type" value="Genomic_DNA"/>
</dbReference>
<dbReference type="EMBL" id="BC010280">
    <property type="protein sequence ID" value="AAH10280.1"/>
    <property type="molecule type" value="mRNA"/>
</dbReference>
<dbReference type="EMBL" id="BC012592">
    <property type="protein sequence ID" value="AAH12592.1"/>
    <property type="molecule type" value="mRNA"/>
</dbReference>
<dbReference type="EMBL" id="BC093059">
    <property type="protein sequence ID" value="AAH93059.1"/>
    <property type="molecule type" value="mRNA"/>
</dbReference>
<dbReference type="CCDS" id="CCDS6276.1"/>
<dbReference type="RefSeq" id="NP_005827.1">
    <property type="nucleotide sequence ID" value="NM_005836.3"/>
</dbReference>
<dbReference type="PDB" id="1ONI">
    <property type="method" value="X-ray"/>
    <property type="resolution" value="1.90 A"/>
    <property type="chains" value="A/B/C/D/E/F/G/H/I=2-137"/>
</dbReference>
<dbReference type="PDBsum" id="1ONI"/>
<dbReference type="SMR" id="P52758"/>
<dbReference type="BioGRID" id="115541">
    <property type="interactions" value="42"/>
</dbReference>
<dbReference type="FunCoup" id="P52758">
    <property type="interactions" value="1537"/>
</dbReference>
<dbReference type="IntAct" id="P52758">
    <property type="interactions" value="16"/>
</dbReference>
<dbReference type="STRING" id="9606.ENSP00000254878"/>
<dbReference type="iPTMnet" id="P52758"/>
<dbReference type="PhosphoSitePlus" id="P52758"/>
<dbReference type="BioMuta" id="RIDA"/>
<dbReference type="DMDM" id="1717975"/>
<dbReference type="CPTAC" id="CPTAC-387"/>
<dbReference type="CPTAC" id="CPTAC-388"/>
<dbReference type="jPOST" id="P52758"/>
<dbReference type="MassIVE" id="P52758"/>
<dbReference type="PaxDb" id="9606-ENSP00000254878"/>
<dbReference type="PeptideAtlas" id="P52758"/>
<dbReference type="ProteomicsDB" id="56530"/>
<dbReference type="Pumba" id="P52758"/>
<dbReference type="TopDownProteomics" id="P52758"/>
<dbReference type="Antibodypedia" id="13021">
    <property type="antibodies" value="152 antibodies from 24 providers"/>
</dbReference>
<dbReference type="DNASU" id="10247"/>
<dbReference type="Ensembl" id="ENST00000254878.8">
    <property type="protein sequence ID" value="ENSP00000254878.3"/>
    <property type="gene ID" value="ENSG00000132541.11"/>
</dbReference>
<dbReference type="GeneID" id="10247"/>
<dbReference type="KEGG" id="hsa:10247"/>
<dbReference type="MANE-Select" id="ENST00000254878.8">
    <property type="protein sequence ID" value="ENSP00000254878.3"/>
    <property type="RefSeq nucleotide sequence ID" value="NM_005836.3"/>
    <property type="RefSeq protein sequence ID" value="NP_005827.1"/>
</dbReference>
<dbReference type="UCSC" id="uc003yii.2">
    <property type="organism name" value="human"/>
</dbReference>
<dbReference type="AGR" id="HGNC:16897"/>
<dbReference type="CTD" id="10247"/>
<dbReference type="DisGeNET" id="10247"/>
<dbReference type="GeneCards" id="RIDA"/>
<dbReference type="HGNC" id="HGNC:16897">
    <property type="gene designation" value="RIDA"/>
</dbReference>
<dbReference type="HPA" id="ENSG00000132541">
    <property type="expression patterns" value="Group enriched (kidney, liver)"/>
</dbReference>
<dbReference type="MIM" id="602487">
    <property type="type" value="gene"/>
</dbReference>
<dbReference type="neXtProt" id="NX_P52758"/>
<dbReference type="OpenTargets" id="ENSG00000132541"/>
<dbReference type="PharmGKB" id="PA134890258"/>
<dbReference type="VEuPathDB" id="HostDB:ENSG00000132541"/>
<dbReference type="eggNOG" id="KOG2317">
    <property type="taxonomic scope" value="Eukaryota"/>
</dbReference>
<dbReference type="GeneTree" id="ENSGT00420000029792"/>
<dbReference type="HOGENOM" id="CLU_100715_7_1_1"/>
<dbReference type="InParanoid" id="P52758"/>
<dbReference type="OMA" id="GSYFKEP"/>
<dbReference type="OrthoDB" id="309640at2759"/>
<dbReference type="PAN-GO" id="P52758">
    <property type="GO annotations" value="4 GO annotations based on evolutionary models"/>
</dbReference>
<dbReference type="PhylomeDB" id="P52758"/>
<dbReference type="TreeFam" id="TF105775"/>
<dbReference type="PathwayCommons" id="P52758"/>
<dbReference type="Reactome" id="R-HSA-8849175">
    <property type="pathway name" value="Threonine catabolism"/>
</dbReference>
<dbReference type="SignaLink" id="P52758"/>
<dbReference type="BioGRID-ORCS" id="10247">
    <property type="hits" value="10 hits in 1144 CRISPR screens"/>
</dbReference>
<dbReference type="ChiTaRS" id="RIDA">
    <property type="organism name" value="human"/>
</dbReference>
<dbReference type="EvolutionaryTrace" id="P52758"/>
<dbReference type="GeneWiki" id="Heat-responsive_protein_12"/>
<dbReference type="GenomeRNAi" id="10247"/>
<dbReference type="Pharos" id="P52758">
    <property type="development level" value="Tbio"/>
</dbReference>
<dbReference type="PRO" id="PR:P52758"/>
<dbReference type="Proteomes" id="UP000005640">
    <property type="component" value="Chromosome 8"/>
</dbReference>
<dbReference type="RNAct" id="P52758">
    <property type="molecule type" value="protein"/>
</dbReference>
<dbReference type="Bgee" id="ENSG00000132541">
    <property type="expression patterns" value="Expressed in right lobe of liver and 187 other cell types or tissues"/>
</dbReference>
<dbReference type="ExpressionAtlas" id="P52758">
    <property type="expression patterns" value="baseline and differential"/>
</dbReference>
<dbReference type="GO" id="GO:0005737">
    <property type="term" value="C:cytoplasm"/>
    <property type="evidence" value="ECO:0000314"/>
    <property type="project" value="UniProtKB"/>
</dbReference>
<dbReference type="GO" id="GO:0005829">
    <property type="term" value="C:cytosol"/>
    <property type="evidence" value="ECO:0000318"/>
    <property type="project" value="GO_Central"/>
</dbReference>
<dbReference type="GO" id="GO:0070062">
    <property type="term" value="C:extracellular exosome"/>
    <property type="evidence" value="ECO:0007005"/>
    <property type="project" value="UniProtKB"/>
</dbReference>
<dbReference type="GO" id="GO:0005759">
    <property type="term" value="C:mitochondrial matrix"/>
    <property type="evidence" value="ECO:0000250"/>
    <property type="project" value="UniProtKB"/>
</dbReference>
<dbReference type="GO" id="GO:0005739">
    <property type="term" value="C:mitochondrion"/>
    <property type="evidence" value="ECO:0006056"/>
    <property type="project" value="FlyBase"/>
</dbReference>
<dbReference type="GO" id="GO:0005634">
    <property type="term" value="C:nucleus"/>
    <property type="evidence" value="ECO:0000314"/>
    <property type="project" value="UniProtKB"/>
</dbReference>
<dbReference type="GO" id="GO:0005777">
    <property type="term" value="C:peroxisome"/>
    <property type="evidence" value="ECO:0000250"/>
    <property type="project" value="UniProtKB"/>
</dbReference>
<dbReference type="GO" id="GO:0120242">
    <property type="term" value="F:2-iminobutanoate deaminase activity"/>
    <property type="evidence" value="ECO:0007669"/>
    <property type="project" value="RHEA"/>
</dbReference>
<dbReference type="GO" id="GO:0120243">
    <property type="term" value="F:2-iminopropanoate deaminase activity"/>
    <property type="evidence" value="ECO:0007669"/>
    <property type="project" value="RHEA"/>
</dbReference>
<dbReference type="GO" id="GO:0019239">
    <property type="term" value="F:deaminase activity"/>
    <property type="evidence" value="ECO:0000318"/>
    <property type="project" value="GO_Central"/>
</dbReference>
<dbReference type="GO" id="GO:0003729">
    <property type="term" value="F:mRNA binding"/>
    <property type="evidence" value="ECO:0000314"/>
    <property type="project" value="UniProtKB"/>
</dbReference>
<dbReference type="GO" id="GO:0003723">
    <property type="term" value="F:RNA binding"/>
    <property type="evidence" value="ECO:0007005"/>
    <property type="project" value="UniProtKB"/>
</dbReference>
<dbReference type="GO" id="GO:0016892">
    <property type="term" value="F:RNA endonuclease activity, producing 3'-phosphomonoesters"/>
    <property type="evidence" value="ECO:0000250"/>
    <property type="project" value="UniProtKB"/>
</dbReference>
<dbReference type="GO" id="GO:0019518">
    <property type="term" value="P:L-threonine catabolic process to glycine"/>
    <property type="evidence" value="ECO:0000304"/>
    <property type="project" value="Reactome"/>
</dbReference>
<dbReference type="GO" id="GO:0006629">
    <property type="term" value="P:lipid metabolic process"/>
    <property type="evidence" value="ECO:0007669"/>
    <property type="project" value="UniProtKB-KW"/>
</dbReference>
<dbReference type="GO" id="GO:0006402">
    <property type="term" value="P:mRNA catabolic process"/>
    <property type="evidence" value="ECO:0000314"/>
    <property type="project" value="UniProtKB"/>
</dbReference>
<dbReference type="GO" id="GO:0061157">
    <property type="term" value="P:mRNA destabilization"/>
    <property type="evidence" value="ECO:0000314"/>
    <property type="project" value="UniProtKB"/>
</dbReference>
<dbReference type="GO" id="GO:0017148">
    <property type="term" value="P:negative regulation of translation"/>
    <property type="evidence" value="ECO:0000250"/>
    <property type="project" value="UniProtKB"/>
</dbReference>
<dbReference type="CDD" id="cd00448">
    <property type="entry name" value="YjgF_YER057c_UK114_family"/>
    <property type="match status" value="1"/>
</dbReference>
<dbReference type="FunFam" id="3.30.1330.40:FF:000008">
    <property type="entry name" value="ribonuclease UK114 isoform X2"/>
    <property type="match status" value="1"/>
</dbReference>
<dbReference type="Gene3D" id="3.30.1330.40">
    <property type="entry name" value="RutC-like"/>
    <property type="match status" value="1"/>
</dbReference>
<dbReference type="InterPro" id="IPR006056">
    <property type="entry name" value="RidA"/>
</dbReference>
<dbReference type="InterPro" id="IPR019897">
    <property type="entry name" value="RidA_CS"/>
</dbReference>
<dbReference type="InterPro" id="IPR035959">
    <property type="entry name" value="RutC-like_sf"/>
</dbReference>
<dbReference type="InterPro" id="IPR006175">
    <property type="entry name" value="YjgF/YER057c/UK114"/>
</dbReference>
<dbReference type="NCBIfam" id="TIGR00004">
    <property type="entry name" value="Rid family detoxifying hydrolase"/>
    <property type="match status" value="1"/>
</dbReference>
<dbReference type="PANTHER" id="PTHR11803">
    <property type="entry name" value="2-IMINOBUTANOATE/2-IMINOPROPANOATE DEAMINASE RIDA"/>
    <property type="match status" value="1"/>
</dbReference>
<dbReference type="PANTHER" id="PTHR11803:SF53">
    <property type="entry name" value="2-IMINOBUTANOATE_2-IMINOPROPANOATE DEAMINASE"/>
    <property type="match status" value="1"/>
</dbReference>
<dbReference type="Pfam" id="PF01042">
    <property type="entry name" value="Ribonuc_L-PSP"/>
    <property type="match status" value="1"/>
</dbReference>
<dbReference type="SUPFAM" id="SSF55298">
    <property type="entry name" value="YjgF-like"/>
    <property type="match status" value="1"/>
</dbReference>
<dbReference type="PROSITE" id="PS01094">
    <property type="entry name" value="UPF0076"/>
    <property type="match status" value="1"/>
</dbReference>
<comment type="function">
    <text evidence="4 5">Catalyzes the hydrolytic deamination of enamine/imine intermediates that form during the course of normal metabolism. May facilitate the release of ammonia from these potentially toxic reactive metabolites, reducing their impact on cellular components. It may act on enamine/imine intermediates formed by several types of pyridoxal-5'-phosphate-dependent dehydratases including L-threonine dehydratase.</text>
</comment>
<comment type="function">
    <text evidence="6 7">Also promotes endoribonucleolytic cleavage of some transcripts by promoting recruitment of the ribonuclease P/MRP complex (PubMed:30930054, PubMed:8973653). Acts by bridging YTHDF2 and the ribonuclease P/MRP complex (PubMed:30930054). RIDA/HRSP12 binds to N6-methyladenosine (m6A)-containing mRNAs containing a 5'-GGUUC-3' motif: cooperative binding of RIDA/HRSP12 and YTHDF2 to such transcripts lead to recruitment of the ribonuclease P/MRP complex and subsequent endoribonucleolytic cleavage (PubMed:30930054).</text>
</comment>
<comment type="catalytic activity">
    <reaction evidence="5">
        <text>2-iminobutanoate + H2O = 2-oxobutanoate + NH4(+)</text>
        <dbReference type="Rhea" id="RHEA:39975"/>
        <dbReference type="ChEBI" id="CHEBI:15377"/>
        <dbReference type="ChEBI" id="CHEBI:16763"/>
        <dbReference type="ChEBI" id="CHEBI:28938"/>
        <dbReference type="ChEBI" id="CHEBI:76545"/>
        <dbReference type="EC" id="3.5.99.10"/>
    </reaction>
</comment>
<comment type="catalytic activity">
    <reaction evidence="5">
        <text>2-iminopropanoate + H2O = pyruvate + NH4(+)</text>
        <dbReference type="Rhea" id="RHEA:40671"/>
        <dbReference type="ChEBI" id="CHEBI:15361"/>
        <dbReference type="ChEBI" id="CHEBI:15377"/>
        <dbReference type="ChEBI" id="CHEBI:28938"/>
        <dbReference type="ChEBI" id="CHEBI:44400"/>
        <dbReference type="EC" id="3.5.99.10"/>
    </reaction>
</comment>
<comment type="subunit">
    <text evidence="3 6">Homotrimer (PubMed:14997576). Interacts with YTHDF2 (PubMed:30930054).</text>
</comment>
<comment type="interaction">
    <interactant intactId="EBI-1045080">
        <id>P52758</id>
    </interactant>
    <interactant intactId="EBI-11524452">
        <id>Q8N9N5-2</id>
        <label>BANP</label>
    </interactant>
    <organismsDiffer>false</organismsDiffer>
    <experiments>3</experiments>
</comment>
<comment type="subcellular location">
    <subcellularLocation>
        <location evidence="7">Cytoplasm</location>
    </subcellularLocation>
    <subcellularLocation>
        <location evidence="7">Nucleus</location>
    </subcellularLocation>
    <subcellularLocation>
        <location evidence="1">Peroxisome</location>
    </subcellularLocation>
    <subcellularLocation>
        <location evidence="1">Mitochondrion</location>
    </subcellularLocation>
    <text evidence="7">Mostly cytoplasmic but, in less differentiated cells occasionally nuclear.</text>
</comment>
<comment type="tissue specificity">
    <text evidence="7 8">Expressed predominantly in liver and kidney. Lower levels in lung and brain.</text>
</comment>
<comment type="developmental stage">
    <text evidence="7">Up-regulated during cellular differentiation.</text>
</comment>
<comment type="similarity">
    <text evidence="11">Belongs to the RutC family.</text>
</comment>
<protein>
    <recommendedName>
        <fullName evidence="13">2-iminobutanoate/2-iminopropanoate deaminase</fullName>
        <ecNumber evidence="5">3.5.99.10</ecNumber>
    </recommendedName>
    <alternativeName>
        <fullName evidence="10">14.5 kDa translational inhibitor protein</fullName>
        <shortName evidence="9">hp14.5</shortName>
        <shortName evidence="10">p14.5</shortName>
    </alternativeName>
    <alternativeName>
        <fullName evidence="14">Heat-responsive protein 12</fullName>
    </alternativeName>
    <alternativeName>
        <fullName evidence="14">Reactive intermediate imine deaminase A homolog</fullName>
    </alternativeName>
    <alternativeName>
        <fullName evidence="1">Translation inhibitor L-PSP ribonuclease</fullName>
    </alternativeName>
    <alternativeName>
        <fullName evidence="12">UK114 antigen homolog</fullName>
    </alternativeName>
</protein>
<name>RIDA_HUMAN</name>
<organism>
    <name type="scientific">Homo sapiens</name>
    <name type="common">Human</name>
    <dbReference type="NCBI Taxonomy" id="9606"/>
    <lineage>
        <taxon>Eukaryota</taxon>
        <taxon>Metazoa</taxon>
        <taxon>Chordata</taxon>
        <taxon>Craniata</taxon>
        <taxon>Vertebrata</taxon>
        <taxon>Euteleostomi</taxon>
        <taxon>Mammalia</taxon>
        <taxon>Eutheria</taxon>
        <taxon>Euarchontoglires</taxon>
        <taxon>Primates</taxon>
        <taxon>Haplorrhini</taxon>
        <taxon>Catarrhini</taxon>
        <taxon>Hominidae</taxon>
        <taxon>Homo</taxon>
    </lineage>
</organism>
<reference key="1">
    <citation type="journal article" date="1996" name="Eur. J. Biochem.">
        <title>Isolation and characterization of a 14.5-kDa trichloroacetic-acid-soluble translational inhibitor protein from human monocytes that is upregulated upon cellular differentiation.</title>
        <authorList>
            <person name="Schmiedeknecht G."/>
            <person name="Kerkhoff C."/>
            <person name="Orso E."/>
            <person name="Stoehr J."/>
            <person name="Aslanidis C."/>
            <person name="Nagy G.M."/>
            <person name="Knuechel R."/>
            <person name="Schmitz G."/>
        </authorList>
    </citation>
    <scope>NUCLEOTIDE SEQUENCE [MRNA]</scope>
    <scope>PROTEIN SEQUENCE OF 14-28; 30-43; 68-78 AND 98-113</scope>
    <scope>FUNCTION</scope>
    <scope>SUBCELLULAR LOCATION</scope>
    <scope>TISSUE SPECIFICITY</scope>
    <scope>DEVELOPMENTAL STAGE</scope>
    <source>
        <tissue>Liver</tissue>
    </source>
</reference>
<reference key="2">
    <citation type="submission" date="2001-02" db="EMBL/GenBank/DDBJ databases">
        <title>Genomic structure of the human translational inhibitor protein p14.5.</title>
        <authorList>
            <person name="Pozdniakovaite N."/>
            <person name="Popendikyte V."/>
            <person name="Naktinis V."/>
        </authorList>
    </citation>
    <scope>NUCLEOTIDE SEQUENCE [GENOMIC DNA]</scope>
</reference>
<reference key="3">
    <citation type="submission" date="2004-06" db="EMBL/GenBank/DDBJ databases">
        <title>Cloning of human full open reading frames in Gateway(TM) system entry vector (pDONR201).</title>
        <authorList>
            <person name="Halleck A."/>
            <person name="Ebert L."/>
            <person name="Mkoundinya M."/>
            <person name="Schick M."/>
            <person name="Eisenstein S."/>
            <person name="Neubert P."/>
            <person name="Kstrang K."/>
            <person name="Schatten R."/>
            <person name="Shen B."/>
            <person name="Henze S."/>
            <person name="Mar W."/>
            <person name="Korn B."/>
            <person name="Zuo D."/>
            <person name="Hu Y."/>
            <person name="LaBaer J."/>
        </authorList>
    </citation>
    <scope>NUCLEOTIDE SEQUENCE [LARGE SCALE MRNA]</scope>
</reference>
<reference key="4">
    <citation type="submission" date="2005-07" db="EMBL/GenBank/DDBJ databases">
        <authorList>
            <person name="Mural R.J."/>
            <person name="Istrail S."/>
            <person name="Sutton G."/>
            <person name="Florea L."/>
            <person name="Halpern A.L."/>
            <person name="Mobarry C.M."/>
            <person name="Lippert R."/>
            <person name="Walenz B."/>
            <person name="Shatkay H."/>
            <person name="Dew I."/>
            <person name="Miller J.R."/>
            <person name="Flanigan M.J."/>
            <person name="Edwards N.J."/>
            <person name="Bolanos R."/>
            <person name="Fasulo D."/>
            <person name="Halldorsson B.V."/>
            <person name="Hannenhalli S."/>
            <person name="Turner R."/>
            <person name="Yooseph S."/>
            <person name="Lu F."/>
            <person name="Nusskern D.R."/>
            <person name="Shue B.C."/>
            <person name="Zheng X.H."/>
            <person name="Zhong F."/>
            <person name="Delcher A.L."/>
            <person name="Huson D.H."/>
            <person name="Kravitz S.A."/>
            <person name="Mouchard L."/>
            <person name="Reinert K."/>
            <person name="Remington K.A."/>
            <person name="Clark A.G."/>
            <person name="Waterman M.S."/>
            <person name="Eichler E.E."/>
            <person name="Adams M.D."/>
            <person name="Hunkapiller M.W."/>
            <person name="Myers E.W."/>
            <person name="Venter J.C."/>
        </authorList>
    </citation>
    <scope>NUCLEOTIDE SEQUENCE [LARGE SCALE GENOMIC DNA]</scope>
</reference>
<reference key="5">
    <citation type="journal article" date="2004" name="Genome Res.">
        <title>The status, quality, and expansion of the NIH full-length cDNA project: the Mammalian Gene Collection (MGC).</title>
        <authorList>
            <consortium name="The MGC Project Team"/>
        </authorList>
    </citation>
    <scope>NUCLEOTIDE SEQUENCE [LARGE SCALE MRNA]</scope>
    <source>
        <tissue>Bone marrow</tissue>
        <tissue>Cervix</tissue>
        <tissue>Skin</tissue>
    </source>
</reference>
<reference key="6">
    <citation type="journal article" date="1997" name="Hepatology">
        <title>Hrp12, a novel heat-responsive, tissue-specific, phosphorylated protein isolated from mouse liver.</title>
        <authorList>
            <person name="Samuel S.J."/>
            <person name="Tzung S.P."/>
            <person name="Cohen S.A."/>
        </authorList>
    </citation>
    <scope>TISSUE SPECIFICITY</scope>
</reference>
<reference key="7">
    <citation type="journal article" date="2010" name="J. Biol. Chem.">
        <title>Members of the YjgF/YER057c/UK114 family of proteins inhibit phosphoribosylamine synthesis in vitro.</title>
        <authorList>
            <person name="Lambrecht J.A."/>
            <person name="Browne B.A."/>
            <person name="Downs D.M."/>
        </authorList>
    </citation>
    <scope>FUNCTION</scope>
</reference>
<reference key="8">
    <citation type="journal article" date="2011" name="BMC Syst. Biol.">
        <title>Initial characterization of the human central proteome.</title>
        <authorList>
            <person name="Burkard T.R."/>
            <person name="Planyavsky M."/>
            <person name="Kaupe I."/>
            <person name="Breitwieser F.P."/>
            <person name="Buerckstuemmer T."/>
            <person name="Bennett K.L."/>
            <person name="Superti-Furga G."/>
            <person name="Colinge J."/>
        </authorList>
    </citation>
    <scope>IDENTIFICATION BY MASS SPECTROMETRY [LARGE SCALE ANALYSIS]</scope>
</reference>
<reference key="9">
    <citation type="journal article" date="2012" name="J. Biol. Chem.">
        <title>The conserved YjgF protein family deaminates enamine/imine intermediates of pyridoxal-5'-phosphate (PLP)-dependent enzyme reactions.</title>
        <authorList>
            <person name="Lambrecht J.A."/>
            <person name="Flynn J.M."/>
            <person name="Downs D.M."/>
        </authorList>
    </citation>
    <scope>FUNCTION</scope>
    <scope>CATALYTIC ACTIVITY</scope>
</reference>
<reference key="10">
    <citation type="journal article" date="2014" name="J. Proteomics">
        <title>An enzyme assisted RP-RPLC approach for in-depth analysis of human liver phosphoproteome.</title>
        <authorList>
            <person name="Bian Y."/>
            <person name="Song C."/>
            <person name="Cheng K."/>
            <person name="Dong M."/>
            <person name="Wang F."/>
            <person name="Huang J."/>
            <person name="Sun D."/>
            <person name="Wang L."/>
            <person name="Ye M."/>
            <person name="Zou H."/>
        </authorList>
    </citation>
    <scope>PHOSPHORYLATION [LARGE SCALE ANALYSIS] AT THR-74 AND SER-136</scope>
    <scope>IDENTIFICATION BY MASS SPECTROMETRY [LARGE SCALE ANALYSIS]</scope>
    <source>
        <tissue>Liver</tissue>
    </source>
</reference>
<reference key="11">
    <citation type="journal article" date="2015" name="Proteomics">
        <title>N-terminome analysis of the human mitochondrial proteome.</title>
        <authorList>
            <person name="Vaca Jacome A.S."/>
            <person name="Rabilloud T."/>
            <person name="Schaeffer-Reiss C."/>
            <person name="Rompais M."/>
            <person name="Ayoub D."/>
            <person name="Lane L."/>
            <person name="Bairoch A."/>
            <person name="Van Dorsselaer A."/>
            <person name="Carapito C."/>
        </authorList>
    </citation>
    <scope>ACETYLATION [LARGE SCALE ANALYSIS] AT SER-2</scope>
    <scope>CLEAVAGE OF INITIATOR METHIONINE [LARGE SCALE ANALYSIS]</scope>
    <scope>IDENTIFICATION BY MASS SPECTROMETRY [LARGE SCALE ANALYSIS]</scope>
</reference>
<reference key="12">
    <citation type="journal article" date="2019" name="Mol. Cell">
        <title>Endoribonucleolytic cleavage of m6A-containing RNAs by RNase P/MRP complex.</title>
        <authorList>
            <person name="Park O.H."/>
            <person name="Ha H."/>
            <person name="Lee Y."/>
            <person name="Boo S.H."/>
            <person name="Kwon D.H."/>
            <person name="Song H.K."/>
            <person name="Kim Y.K."/>
        </authorList>
    </citation>
    <scope>FUNCTION</scope>
    <scope>INTERACTION WITH YTHDF2</scope>
</reference>
<reference key="13">
    <citation type="journal article" date="2004" name="Proteins">
        <title>Crystal structure of Homo sapiens protein hp14.5.</title>
        <authorList>
            <person name="Manjasetty B.A."/>
            <person name="Delbruck H."/>
            <person name="Pham D.-T."/>
            <person name="Mueller U."/>
            <person name="Fieber-Erdmann M."/>
            <person name="Scheich C."/>
            <person name="Sievert V."/>
            <person name="Buessow K."/>
            <person name="Neisen F.H."/>
            <person name="Weihofen W."/>
            <person name="Loll B."/>
            <person name="Saenger W."/>
            <person name="Heinemann U."/>
        </authorList>
    </citation>
    <scope>X-RAY CRYSTALLOGRAPHY (1.9 ANGSTROMS)</scope>
    <scope>SUBUNIT</scope>
</reference>
<gene>
    <name evidence="14" type="primary">RIDA</name>
    <name evidence="14" type="synonym">HRSP12</name>
</gene>
<sequence>MSSLIRRVISTAKAPGAIGPYSQAVLVDRTIYISGQIGMDPSSGQLVSGGVAEEAKQALKNMGEILKAAGCDFTNVVKTTVLLADINDFNTVNEIYKQYFKSNFPARAAYQVAALPKGSRIEIEAVAIQGPLTTASL</sequence>